<organism>
    <name type="scientific">Lepidium virginicum</name>
    <name type="common">Virginia pepperweed</name>
    <dbReference type="NCBI Taxonomy" id="59292"/>
    <lineage>
        <taxon>Eukaryota</taxon>
        <taxon>Viridiplantae</taxon>
        <taxon>Streptophyta</taxon>
        <taxon>Embryophyta</taxon>
        <taxon>Tracheophyta</taxon>
        <taxon>Spermatophyta</taxon>
        <taxon>Magnoliopsida</taxon>
        <taxon>eudicotyledons</taxon>
        <taxon>Gunneridae</taxon>
        <taxon>Pentapetalae</taxon>
        <taxon>rosids</taxon>
        <taxon>malvids</taxon>
        <taxon>Brassicales</taxon>
        <taxon>Brassicaceae</taxon>
        <taxon>Lepidieae</taxon>
        <taxon>Lepidium</taxon>
    </lineage>
</organism>
<feature type="chain" id="PRO_0000309302" description="ATP-dependent Clp protease proteolytic subunit">
    <location>
        <begin position="1"/>
        <end position="196"/>
    </location>
</feature>
<feature type="active site" description="Nucleophile" evidence="1">
    <location>
        <position position="101"/>
    </location>
</feature>
<feature type="active site" evidence="1">
    <location>
        <position position="126"/>
    </location>
</feature>
<proteinExistence type="inferred from homology"/>
<evidence type="ECO:0000255" key="1">
    <source>
        <dbReference type="HAMAP-Rule" id="MF_00444"/>
    </source>
</evidence>
<geneLocation type="chloroplast"/>
<protein>
    <recommendedName>
        <fullName evidence="1">ATP-dependent Clp protease proteolytic subunit</fullName>
        <ecNumber evidence="1">3.4.21.92</ecNumber>
    </recommendedName>
    <alternativeName>
        <fullName evidence="1">Endopeptidase Clp</fullName>
    </alternativeName>
</protein>
<keyword id="KW-0150">Chloroplast</keyword>
<keyword id="KW-0378">Hydrolase</keyword>
<keyword id="KW-0934">Plastid</keyword>
<keyword id="KW-0645">Protease</keyword>
<keyword id="KW-0720">Serine protease</keyword>
<reference key="1">
    <citation type="submission" date="2007-03" db="EMBL/GenBank/DDBJ databases">
        <title>Sequencing analysis of Lepidium virginicum JO26 chloroplast DNA.</title>
        <authorList>
            <person name="Hosouchi T."/>
            <person name="Tsuruoka H."/>
            <person name="Kotani H."/>
        </authorList>
    </citation>
    <scope>NUCLEOTIDE SEQUENCE [LARGE SCALE GENOMIC DNA]</scope>
    <source>
        <strain>JO26</strain>
    </source>
</reference>
<gene>
    <name evidence="1" type="primary">clpP</name>
</gene>
<comment type="function">
    <text evidence="1">Cleaves peptides in various proteins in a process that requires ATP hydrolysis. Has a chymotrypsin-like activity. Plays a major role in the degradation of misfolded proteins.</text>
</comment>
<comment type="catalytic activity">
    <reaction evidence="1">
        <text>Hydrolysis of proteins to small peptides in the presence of ATP and magnesium. alpha-casein is the usual test substrate. In the absence of ATP, only oligopeptides shorter than five residues are hydrolyzed (such as succinyl-Leu-Tyr-|-NHMec, and Leu-Tyr-Leu-|-Tyr-Trp, in which cleavage of the -Tyr-|-Leu- and -Tyr-|-Trp bonds also occurs).</text>
        <dbReference type="EC" id="3.4.21.92"/>
    </reaction>
</comment>
<comment type="subunit">
    <text>Component of the chloroplastic Clp protease core complex.</text>
</comment>
<comment type="subcellular location">
    <subcellularLocation>
        <location evidence="1">Plastid</location>
        <location evidence="1">Chloroplast stroma</location>
    </subcellularLocation>
</comment>
<comment type="similarity">
    <text evidence="1">Belongs to the peptidase S14 family.</text>
</comment>
<name>CLPP_LEPVR</name>
<dbReference type="EC" id="3.4.21.92" evidence="1"/>
<dbReference type="EMBL" id="AP009374">
    <property type="protein sequence ID" value="BAF50486.1"/>
    <property type="molecule type" value="Genomic_DNA"/>
</dbReference>
<dbReference type="RefSeq" id="YP_001123662.1">
    <property type="nucleotide sequence ID" value="NC_009273.1"/>
</dbReference>
<dbReference type="SMR" id="A4QLD1"/>
<dbReference type="MEROPS" id="S14.002"/>
<dbReference type="GeneID" id="4962067"/>
<dbReference type="GO" id="GO:0009570">
    <property type="term" value="C:chloroplast stroma"/>
    <property type="evidence" value="ECO:0007669"/>
    <property type="project" value="UniProtKB-SubCell"/>
</dbReference>
<dbReference type="GO" id="GO:0009368">
    <property type="term" value="C:endopeptidase Clp complex"/>
    <property type="evidence" value="ECO:0007669"/>
    <property type="project" value="TreeGrafter"/>
</dbReference>
<dbReference type="GO" id="GO:0004176">
    <property type="term" value="F:ATP-dependent peptidase activity"/>
    <property type="evidence" value="ECO:0007669"/>
    <property type="project" value="InterPro"/>
</dbReference>
<dbReference type="GO" id="GO:0051117">
    <property type="term" value="F:ATPase binding"/>
    <property type="evidence" value="ECO:0007669"/>
    <property type="project" value="TreeGrafter"/>
</dbReference>
<dbReference type="GO" id="GO:0004252">
    <property type="term" value="F:serine-type endopeptidase activity"/>
    <property type="evidence" value="ECO:0007669"/>
    <property type="project" value="UniProtKB-UniRule"/>
</dbReference>
<dbReference type="GO" id="GO:0006515">
    <property type="term" value="P:protein quality control for misfolded or incompletely synthesized proteins"/>
    <property type="evidence" value="ECO:0007669"/>
    <property type="project" value="TreeGrafter"/>
</dbReference>
<dbReference type="CDD" id="cd07017">
    <property type="entry name" value="S14_ClpP_2"/>
    <property type="match status" value="1"/>
</dbReference>
<dbReference type="FunFam" id="3.90.226.10:FF:000006">
    <property type="entry name" value="ATP-dependent Clp protease proteolytic subunit"/>
    <property type="match status" value="1"/>
</dbReference>
<dbReference type="Gene3D" id="3.90.226.10">
    <property type="entry name" value="2-enoyl-CoA Hydratase, Chain A, domain 1"/>
    <property type="match status" value="1"/>
</dbReference>
<dbReference type="HAMAP" id="MF_00444">
    <property type="entry name" value="ClpP"/>
    <property type="match status" value="1"/>
</dbReference>
<dbReference type="InterPro" id="IPR001907">
    <property type="entry name" value="ClpP"/>
</dbReference>
<dbReference type="InterPro" id="IPR029045">
    <property type="entry name" value="ClpP/crotonase-like_dom_sf"/>
</dbReference>
<dbReference type="InterPro" id="IPR023562">
    <property type="entry name" value="ClpP/TepA"/>
</dbReference>
<dbReference type="InterPro" id="IPR033135">
    <property type="entry name" value="ClpP_His_AS"/>
</dbReference>
<dbReference type="PANTHER" id="PTHR10381">
    <property type="entry name" value="ATP-DEPENDENT CLP PROTEASE PROTEOLYTIC SUBUNIT"/>
    <property type="match status" value="1"/>
</dbReference>
<dbReference type="PANTHER" id="PTHR10381:SF15">
    <property type="entry name" value="CHLOROPLASTIC ATP-DEPENDENT CLP PROTEASE PROTEOLYTIC SUBUNIT 1"/>
    <property type="match status" value="1"/>
</dbReference>
<dbReference type="Pfam" id="PF00574">
    <property type="entry name" value="CLP_protease"/>
    <property type="match status" value="1"/>
</dbReference>
<dbReference type="PRINTS" id="PR00127">
    <property type="entry name" value="CLPPROTEASEP"/>
</dbReference>
<dbReference type="SUPFAM" id="SSF52096">
    <property type="entry name" value="ClpP/crotonase"/>
    <property type="match status" value="1"/>
</dbReference>
<dbReference type="PROSITE" id="PS00382">
    <property type="entry name" value="CLP_PROTEASE_HIS"/>
    <property type="match status" value="1"/>
</dbReference>
<sequence>MPIGVPKVPFRSPGEGDTSWVDIYNRLYRERLFFLGQDVDTEISNQLISLMIYLSIEKDTKDLYLFINSPGGWVISGMAIYDTMQFVRPDVQTICMGLAASIASFILVGGAITKRIAFPHARVMIHQPASSFYEAQTGEFILEAEELLKLRETITRVYVQRTGKPIWVVSEDMERDVFMSATEAQAHGIVDLVAVQ</sequence>
<accession>A4QLD1</accession>